<name>METN2_PSEF5</name>
<accession>Q4KK46</accession>
<reference key="1">
    <citation type="journal article" date="2005" name="Nat. Biotechnol.">
        <title>Complete genome sequence of the plant commensal Pseudomonas fluorescens Pf-5.</title>
        <authorList>
            <person name="Paulsen I.T."/>
            <person name="Press C.M."/>
            <person name="Ravel J."/>
            <person name="Kobayashi D.Y."/>
            <person name="Myers G.S.A."/>
            <person name="Mavrodi D.V."/>
            <person name="DeBoy R.T."/>
            <person name="Seshadri R."/>
            <person name="Ren Q."/>
            <person name="Madupu R."/>
            <person name="Dodson R.J."/>
            <person name="Durkin A.S."/>
            <person name="Brinkac L.M."/>
            <person name="Daugherty S.C."/>
            <person name="Sullivan S.A."/>
            <person name="Rosovitz M.J."/>
            <person name="Gwinn M.L."/>
            <person name="Zhou L."/>
            <person name="Schneider D.J."/>
            <person name="Cartinhour S.W."/>
            <person name="Nelson W.C."/>
            <person name="Weidman J."/>
            <person name="Watkins K."/>
            <person name="Tran K."/>
            <person name="Khouri H."/>
            <person name="Pierson E.A."/>
            <person name="Pierson L.S. III"/>
            <person name="Thomashow L.S."/>
            <person name="Loper J.E."/>
        </authorList>
    </citation>
    <scope>NUCLEOTIDE SEQUENCE [LARGE SCALE GENOMIC DNA]</scope>
    <source>
        <strain>ATCC BAA-477 / NRRL B-23932 / Pf-5</strain>
    </source>
</reference>
<protein>
    <recommendedName>
        <fullName evidence="1">Methionine import ATP-binding protein MetN 2</fullName>
        <ecNumber evidence="1">7.4.2.11</ecNumber>
    </recommendedName>
</protein>
<proteinExistence type="inferred from homology"/>
<sequence length="374" mass="41178">MSVATLQRKLPEAAPRRAGQTELHPELNRAQVRFIGLGKTYQGQQGPVQALHDIDLSIQRGEVFGIIGRSGAGKSSLIRTINRLEQPSSGRVLIDQVDIGDFDEDRLVALRRRIGMIFQHFNLMSAKTVWHNVELPLKVAGVPKAERERKVRELLELVGLKDKHRAYPAQLSGGQKQRVGIARALVHDPEILLCDEATSALDPETTQSILGLLKEINQRLGLTIILITHEMAVIRDICDRVVVLEHGRIVEQGPVWEVFGNPQHEVSKTLLAPLQHGLPEELQNRLQSHPTSSDAALVLSLRFTGSSHEEPDLAALFGALGGRVRLLQGGVERIQGHALGQLLLAVQGSSLEAAQLRQRAGQWAQQVEVLGYVV</sequence>
<evidence type="ECO:0000255" key="1">
    <source>
        <dbReference type="HAMAP-Rule" id="MF_01719"/>
    </source>
</evidence>
<evidence type="ECO:0000256" key="2">
    <source>
        <dbReference type="SAM" id="MobiDB-lite"/>
    </source>
</evidence>
<gene>
    <name evidence="1" type="primary">metN2</name>
    <name type="ordered locus">PFL_0241</name>
</gene>
<organism>
    <name type="scientific">Pseudomonas fluorescens (strain ATCC BAA-477 / NRRL B-23932 / Pf-5)</name>
    <dbReference type="NCBI Taxonomy" id="220664"/>
    <lineage>
        <taxon>Bacteria</taxon>
        <taxon>Pseudomonadati</taxon>
        <taxon>Pseudomonadota</taxon>
        <taxon>Gammaproteobacteria</taxon>
        <taxon>Pseudomonadales</taxon>
        <taxon>Pseudomonadaceae</taxon>
        <taxon>Pseudomonas</taxon>
    </lineage>
</organism>
<keyword id="KW-0029">Amino-acid transport</keyword>
<keyword id="KW-0067">ATP-binding</keyword>
<keyword id="KW-0997">Cell inner membrane</keyword>
<keyword id="KW-1003">Cell membrane</keyword>
<keyword id="KW-0472">Membrane</keyword>
<keyword id="KW-0547">Nucleotide-binding</keyword>
<keyword id="KW-1278">Translocase</keyword>
<keyword id="KW-0813">Transport</keyword>
<feature type="chain" id="PRO_0000270348" description="Methionine import ATP-binding protein MetN 2">
    <location>
        <begin position="1"/>
        <end position="374"/>
    </location>
</feature>
<feature type="domain" description="ABC transporter" evidence="1">
    <location>
        <begin position="32"/>
        <end position="271"/>
    </location>
</feature>
<feature type="region of interest" description="Disordered" evidence="2">
    <location>
        <begin position="1"/>
        <end position="22"/>
    </location>
</feature>
<feature type="binding site" evidence="1">
    <location>
        <begin position="68"/>
        <end position="75"/>
    </location>
    <ligand>
        <name>ATP</name>
        <dbReference type="ChEBI" id="CHEBI:30616"/>
    </ligand>
</feature>
<comment type="function">
    <text evidence="1">Part of the ABC transporter complex MetNIQ involved in methionine import. Responsible for energy coupling to the transport system.</text>
</comment>
<comment type="catalytic activity">
    <reaction evidence="1">
        <text>L-methionine(out) + ATP + H2O = L-methionine(in) + ADP + phosphate + H(+)</text>
        <dbReference type="Rhea" id="RHEA:29779"/>
        <dbReference type="ChEBI" id="CHEBI:15377"/>
        <dbReference type="ChEBI" id="CHEBI:15378"/>
        <dbReference type="ChEBI" id="CHEBI:30616"/>
        <dbReference type="ChEBI" id="CHEBI:43474"/>
        <dbReference type="ChEBI" id="CHEBI:57844"/>
        <dbReference type="ChEBI" id="CHEBI:456216"/>
        <dbReference type="EC" id="7.4.2.11"/>
    </reaction>
</comment>
<comment type="catalytic activity">
    <reaction evidence="1">
        <text>D-methionine(out) + ATP + H2O = D-methionine(in) + ADP + phosphate + H(+)</text>
        <dbReference type="Rhea" id="RHEA:29767"/>
        <dbReference type="ChEBI" id="CHEBI:15377"/>
        <dbReference type="ChEBI" id="CHEBI:15378"/>
        <dbReference type="ChEBI" id="CHEBI:30616"/>
        <dbReference type="ChEBI" id="CHEBI:43474"/>
        <dbReference type="ChEBI" id="CHEBI:57932"/>
        <dbReference type="ChEBI" id="CHEBI:456216"/>
        <dbReference type="EC" id="7.4.2.11"/>
    </reaction>
</comment>
<comment type="subunit">
    <text evidence="1">The complex is composed of two ATP-binding proteins (MetN), two transmembrane proteins (MetI) and a solute-binding protein (MetQ).</text>
</comment>
<comment type="subcellular location">
    <subcellularLocation>
        <location evidence="1">Cell inner membrane</location>
        <topology evidence="1">Peripheral membrane protein</topology>
    </subcellularLocation>
</comment>
<comment type="similarity">
    <text evidence="1">Belongs to the ABC transporter superfamily. Methionine importer (TC 3.A.1.24) family.</text>
</comment>
<dbReference type="EC" id="7.4.2.11" evidence="1"/>
<dbReference type="EMBL" id="CP000076">
    <property type="protein sequence ID" value="AAY95652.1"/>
    <property type="molecule type" value="Genomic_DNA"/>
</dbReference>
<dbReference type="RefSeq" id="WP_011058621.1">
    <property type="nucleotide sequence ID" value="NC_004129.6"/>
</dbReference>
<dbReference type="SMR" id="Q4KK46"/>
<dbReference type="STRING" id="220664.PFL_0241"/>
<dbReference type="KEGG" id="pfl:PFL_0241"/>
<dbReference type="PATRIC" id="fig|220664.5.peg.244"/>
<dbReference type="eggNOG" id="COG1135">
    <property type="taxonomic scope" value="Bacteria"/>
</dbReference>
<dbReference type="HOGENOM" id="CLU_000604_1_3_6"/>
<dbReference type="Proteomes" id="UP000008540">
    <property type="component" value="Chromosome"/>
</dbReference>
<dbReference type="GO" id="GO:0005886">
    <property type="term" value="C:plasma membrane"/>
    <property type="evidence" value="ECO:0007669"/>
    <property type="project" value="UniProtKB-SubCell"/>
</dbReference>
<dbReference type="GO" id="GO:0033232">
    <property type="term" value="F:ABC-type D-methionine transporter activity"/>
    <property type="evidence" value="ECO:0007669"/>
    <property type="project" value="UniProtKB-EC"/>
</dbReference>
<dbReference type="GO" id="GO:0005524">
    <property type="term" value="F:ATP binding"/>
    <property type="evidence" value="ECO:0007669"/>
    <property type="project" value="UniProtKB-KW"/>
</dbReference>
<dbReference type="GO" id="GO:0016887">
    <property type="term" value="F:ATP hydrolysis activity"/>
    <property type="evidence" value="ECO:0007669"/>
    <property type="project" value="InterPro"/>
</dbReference>
<dbReference type="CDD" id="cd03258">
    <property type="entry name" value="ABC_MetN_methionine_transporter"/>
    <property type="match status" value="1"/>
</dbReference>
<dbReference type="FunFam" id="3.40.50.300:FF:000056">
    <property type="entry name" value="Cell division ATP-binding protein FtsE"/>
    <property type="match status" value="1"/>
</dbReference>
<dbReference type="Gene3D" id="3.30.70.260">
    <property type="match status" value="1"/>
</dbReference>
<dbReference type="Gene3D" id="3.40.50.300">
    <property type="entry name" value="P-loop containing nucleotide triphosphate hydrolases"/>
    <property type="match status" value="1"/>
</dbReference>
<dbReference type="InterPro" id="IPR003593">
    <property type="entry name" value="AAA+_ATPase"/>
</dbReference>
<dbReference type="InterPro" id="IPR003439">
    <property type="entry name" value="ABC_transporter-like_ATP-bd"/>
</dbReference>
<dbReference type="InterPro" id="IPR017871">
    <property type="entry name" value="ABC_transporter-like_CS"/>
</dbReference>
<dbReference type="InterPro" id="IPR045865">
    <property type="entry name" value="ACT-like_dom_sf"/>
</dbReference>
<dbReference type="InterPro" id="IPR041701">
    <property type="entry name" value="MetN_ABC"/>
</dbReference>
<dbReference type="InterPro" id="IPR050086">
    <property type="entry name" value="MetN_ABC_transporter-like"/>
</dbReference>
<dbReference type="InterPro" id="IPR018449">
    <property type="entry name" value="NIL_domain"/>
</dbReference>
<dbReference type="InterPro" id="IPR027417">
    <property type="entry name" value="P-loop_NTPase"/>
</dbReference>
<dbReference type="PANTHER" id="PTHR43166">
    <property type="entry name" value="AMINO ACID IMPORT ATP-BINDING PROTEIN"/>
    <property type="match status" value="1"/>
</dbReference>
<dbReference type="PANTHER" id="PTHR43166:SF30">
    <property type="entry name" value="METHIONINE IMPORT ATP-BINDING PROTEIN METN"/>
    <property type="match status" value="1"/>
</dbReference>
<dbReference type="Pfam" id="PF00005">
    <property type="entry name" value="ABC_tran"/>
    <property type="match status" value="1"/>
</dbReference>
<dbReference type="Pfam" id="PF09383">
    <property type="entry name" value="NIL"/>
    <property type="match status" value="1"/>
</dbReference>
<dbReference type="SMART" id="SM00382">
    <property type="entry name" value="AAA"/>
    <property type="match status" value="1"/>
</dbReference>
<dbReference type="SMART" id="SM00930">
    <property type="entry name" value="NIL"/>
    <property type="match status" value="1"/>
</dbReference>
<dbReference type="SUPFAM" id="SSF55021">
    <property type="entry name" value="ACT-like"/>
    <property type="match status" value="1"/>
</dbReference>
<dbReference type="SUPFAM" id="SSF52540">
    <property type="entry name" value="P-loop containing nucleoside triphosphate hydrolases"/>
    <property type="match status" value="1"/>
</dbReference>
<dbReference type="PROSITE" id="PS00211">
    <property type="entry name" value="ABC_TRANSPORTER_1"/>
    <property type="match status" value="1"/>
</dbReference>
<dbReference type="PROSITE" id="PS50893">
    <property type="entry name" value="ABC_TRANSPORTER_2"/>
    <property type="match status" value="1"/>
</dbReference>
<dbReference type="PROSITE" id="PS51264">
    <property type="entry name" value="METN"/>
    <property type="match status" value="1"/>
</dbReference>